<name>YKV5_SCHPO</name>
<sequence>MKLFLYHFTFIVYYFIISFSYAFSIKQEIIVSSHNASSILNTTAFWFVEFTESKYDKEEFSVIWNEVSMEFPDIRRAKVFCDLDLEFCAQQEIYDHPKVVVLKNGMWMRHVLEKNQITTKSARQFVKSHLGNCDLEQAENETDCFSDDGEYNSDSSSTDPAFELKEDQSWKHSSILRPLETLNFKRFLFGNEIMSKTRAFVMFVSLKHCEDCFHWEAVWSSITRNTDERLKMAQVNCDEEKEMCNHFHIKKFPTFRVFQGFDSIQYNGPLKYQQLLSYSNQVASYQAIKIEEGDIESIENSHPVFFLVLYDFATTSEDFSIIERLKLQLAGVAPLYICNSKALANKYGAQSQPSIIAVRNGMPIVYQAITPREFRDYKRITEWINIVSSPFITELTPTKCHSLLNRKLTVLTLLQPDSEQFFSSQEELLRLGKRWFRFQMQRQRNDIVWSRIKKYSAIAEAKKKGFARKVKRIKYSKISHPTYTESVSFLWLDSSLWLDWIVENLDHTVYVDSITPPVFVIDHSKGVIYVSDRNGNSLTLEEDSLFSTLRIILEHPNSSRLQKLRAPGLCPNGSPNYRNRYKLIVFNLLIALLILSILTIISASRLSRRRRQLLNKQPVFGFYHSLVIAKSD</sequence>
<keyword id="KW-0143">Chaperone</keyword>
<keyword id="KW-1015">Disulfide bond</keyword>
<keyword id="KW-0256">Endoplasmic reticulum</keyword>
<keyword id="KW-0325">Glycoprotein</keyword>
<keyword id="KW-0413">Isomerase</keyword>
<keyword id="KW-0472">Membrane</keyword>
<keyword id="KW-0676">Redox-active center</keyword>
<keyword id="KW-1185">Reference proteome</keyword>
<keyword id="KW-0732">Signal</keyword>
<keyword id="KW-0812">Transmembrane</keyword>
<keyword id="KW-1133">Transmembrane helix</keyword>
<protein>
    <recommendedName>
        <fullName>Thioredoxin domain-containing protein C959.05c</fullName>
        <ecNumber>5.3.4.1</ecNumber>
    </recommendedName>
    <alternativeName>
        <fullName>Putative protein disulfide isomerase C959.05c</fullName>
    </alternativeName>
</protein>
<accession>Q9P4X1</accession>
<gene>
    <name type="ORF">SPAC959.05c</name>
</gene>
<dbReference type="EC" id="5.3.4.1"/>
<dbReference type="EMBL" id="CU329670">
    <property type="protein sequence ID" value="CAB93012.4"/>
    <property type="molecule type" value="Genomic_DNA"/>
</dbReference>
<dbReference type="SMR" id="Q9P4X1"/>
<dbReference type="BioGRID" id="279894">
    <property type="interactions" value="1"/>
</dbReference>
<dbReference type="FunCoup" id="Q9P4X1">
    <property type="interactions" value="209"/>
</dbReference>
<dbReference type="STRING" id="284812.Q9P4X1"/>
<dbReference type="iPTMnet" id="Q9P4X1"/>
<dbReference type="PaxDb" id="4896-SPAC959.05c.1"/>
<dbReference type="EnsemblFungi" id="SPAC959.05c.1">
    <property type="protein sequence ID" value="SPAC959.05c.1:pep"/>
    <property type="gene ID" value="SPAC959.05c"/>
</dbReference>
<dbReference type="KEGG" id="spo:2543474"/>
<dbReference type="PomBase" id="SPAC959.05c"/>
<dbReference type="VEuPathDB" id="FungiDB:SPAC959.05c"/>
<dbReference type="eggNOG" id="KOG0191">
    <property type="taxonomic scope" value="Eukaryota"/>
</dbReference>
<dbReference type="HOGENOM" id="CLU_432898_0_0_1"/>
<dbReference type="InParanoid" id="Q9P4X1"/>
<dbReference type="OMA" id="RQFRSHE"/>
<dbReference type="PRO" id="PR:Q9P4X1"/>
<dbReference type="Proteomes" id="UP000002485">
    <property type="component" value="Chromosome I"/>
</dbReference>
<dbReference type="GO" id="GO:0005783">
    <property type="term" value="C:endoplasmic reticulum"/>
    <property type="evidence" value="ECO:0007005"/>
    <property type="project" value="PomBase"/>
</dbReference>
<dbReference type="GO" id="GO:0005789">
    <property type="term" value="C:endoplasmic reticulum membrane"/>
    <property type="evidence" value="ECO:0000266"/>
    <property type="project" value="PomBase"/>
</dbReference>
<dbReference type="GO" id="GO:0003756">
    <property type="term" value="F:protein disulfide isomerase activity"/>
    <property type="evidence" value="ECO:0000266"/>
    <property type="project" value="PomBase"/>
</dbReference>
<dbReference type="GO" id="GO:0015035">
    <property type="term" value="F:protein-disulfide reductase activity"/>
    <property type="evidence" value="ECO:0000318"/>
    <property type="project" value="GO_Central"/>
</dbReference>
<dbReference type="GO" id="GO:0036503">
    <property type="term" value="P:ERAD pathway"/>
    <property type="evidence" value="ECO:0000266"/>
    <property type="project" value="PomBase"/>
</dbReference>
<dbReference type="GO" id="GO:0006595">
    <property type="term" value="P:polyamine metabolic process"/>
    <property type="evidence" value="ECO:0000250"/>
    <property type="project" value="PomBase"/>
</dbReference>
<dbReference type="GO" id="GO:0034976">
    <property type="term" value="P:response to endoplasmic reticulum stress"/>
    <property type="evidence" value="ECO:0000318"/>
    <property type="project" value="GO_Central"/>
</dbReference>
<dbReference type="CDD" id="cd02961">
    <property type="entry name" value="PDI_a_family"/>
    <property type="match status" value="1"/>
</dbReference>
<dbReference type="FunFam" id="3.40.30.10:FF:000452">
    <property type="entry name" value="RE10237p"/>
    <property type="match status" value="1"/>
</dbReference>
<dbReference type="Gene3D" id="3.40.30.10">
    <property type="entry name" value="Glutaredoxin"/>
    <property type="match status" value="2"/>
</dbReference>
<dbReference type="InterPro" id="IPR036249">
    <property type="entry name" value="Thioredoxin-like_sf"/>
</dbReference>
<dbReference type="InterPro" id="IPR013766">
    <property type="entry name" value="Thioredoxin_domain"/>
</dbReference>
<dbReference type="PANTHER" id="PTHR45815">
    <property type="entry name" value="PROTEIN DISULFIDE-ISOMERASE A6"/>
    <property type="match status" value="1"/>
</dbReference>
<dbReference type="PANTHER" id="PTHR45815:SF3">
    <property type="entry name" value="PROTEIN DISULFIDE-ISOMERASE A6"/>
    <property type="match status" value="1"/>
</dbReference>
<dbReference type="Pfam" id="PF00085">
    <property type="entry name" value="Thioredoxin"/>
    <property type="match status" value="1"/>
</dbReference>
<dbReference type="SUPFAM" id="SSF52833">
    <property type="entry name" value="Thioredoxin-like"/>
    <property type="match status" value="3"/>
</dbReference>
<dbReference type="PROSITE" id="PS51352">
    <property type="entry name" value="THIOREDOXIN_2"/>
    <property type="match status" value="1"/>
</dbReference>
<reference key="1">
    <citation type="journal article" date="2002" name="Nature">
        <title>The genome sequence of Schizosaccharomyces pombe.</title>
        <authorList>
            <person name="Wood V."/>
            <person name="Gwilliam R."/>
            <person name="Rajandream M.A."/>
            <person name="Lyne M.H."/>
            <person name="Lyne R."/>
            <person name="Stewart A."/>
            <person name="Sgouros J.G."/>
            <person name="Peat N."/>
            <person name="Hayles J."/>
            <person name="Baker S.G."/>
            <person name="Basham D."/>
            <person name="Bowman S."/>
            <person name="Brooks K."/>
            <person name="Brown D."/>
            <person name="Brown S."/>
            <person name="Chillingworth T."/>
            <person name="Churcher C.M."/>
            <person name="Collins M."/>
            <person name="Connor R."/>
            <person name="Cronin A."/>
            <person name="Davis P."/>
            <person name="Feltwell T."/>
            <person name="Fraser A."/>
            <person name="Gentles S."/>
            <person name="Goble A."/>
            <person name="Hamlin N."/>
            <person name="Harris D.E."/>
            <person name="Hidalgo J."/>
            <person name="Hodgson G."/>
            <person name="Holroyd S."/>
            <person name="Hornsby T."/>
            <person name="Howarth S."/>
            <person name="Huckle E.J."/>
            <person name="Hunt S."/>
            <person name="Jagels K."/>
            <person name="James K.D."/>
            <person name="Jones L."/>
            <person name="Jones M."/>
            <person name="Leather S."/>
            <person name="McDonald S."/>
            <person name="McLean J."/>
            <person name="Mooney P."/>
            <person name="Moule S."/>
            <person name="Mungall K.L."/>
            <person name="Murphy L.D."/>
            <person name="Niblett D."/>
            <person name="Odell C."/>
            <person name="Oliver K."/>
            <person name="O'Neil S."/>
            <person name="Pearson D."/>
            <person name="Quail M.A."/>
            <person name="Rabbinowitsch E."/>
            <person name="Rutherford K.M."/>
            <person name="Rutter S."/>
            <person name="Saunders D."/>
            <person name="Seeger K."/>
            <person name="Sharp S."/>
            <person name="Skelton J."/>
            <person name="Simmonds M.N."/>
            <person name="Squares R."/>
            <person name="Squares S."/>
            <person name="Stevens K."/>
            <person name="Taylor K."/>
            <person name="Taylor R.G."/>
            <person name="Tivey A."/>
            <person name="Walsh S.V."/>
            <person name="Warren T."/>
            <person name="Whitehead S."/>
            <person name="Woodward J.R."/>
            <person name="Volckaert G."/>
            <person name="Aert R."/>
            <person name="Robben J."/>
            <person name="Grymonprez B."/>
            <person name="Weltjens I."/>
            <person name="Vanstreels E."/>
            <person name="Rieger M."/>
            <person name="Schaefer M."/>
            <person name="Mueller-Auer S."/>
            <person name="Gabel C."/>
            <person name="Fuchs M."/>
            <person name="Duesterhoeft A."/>
            <person name="Fritzc C."/>
            <person name="Holzer E."/>
            <person name="Moestl D."/>
            <person name="Hilbert H."/>
            <person name="Borzym K."/>
            <person name="Langer I."/>
            <person name="Beck A."/>
            <person name="Lehrach H."/>
            <person name="Reinhardt R."/>
            <person name="Pohl T.M."/>
            <person name="Eger P."/>
            <person name="Zimmermann W."/>
            <person name="Wedler H."/>
            <person name="Wambutt R."/>
            <person name="Purnelle B."/>
            <person name="Goffeau A."/>
            <person name="Cadieu E."/>
            <person name="Dreano S."/>
            <person name="Gloux S."/>
            <person name="Lelaure V."/>
            <person name="Mottier S."/>
            <person name="Galibert F."/>
            <person name="Aves S.J."/>
            <person name="Xiang Z."/>
            <person name="Hunt C."/>
            <person name="Moore K."/>
            <person name="Hurst S.M."/>
            <person name="Lucas M."/>
            <person name="Rochet M."/>
            <person name="Gaillardin C."/>
            <person name="Tallada V.A."/>
            <person name="Garzon A."/>
            <person name="Thode G."/>
            <person name="Daga R.R."/>
            <person name="Cruzado L."/>
            <person name="Jimenez J."/>
            <person name="Sanchez M."/>
            <person name="del Rey F."/>
            <person name="Benito J."/>
            <person name="Dominguez A."/>
            <person name="Revuelta J.L."/>
            <person name="Moreno S."/>
            <person name="Armstrong J."/>
            <person name="Forsburg S.L."/>
            <person name="Cerutti L."/>
            <person name="Lowe T."/>
            <person name="McCombie W.R."/>
            <person name="Paulsen I."/>
            <person name="Potashkin J."/>
            <person name="Shpakovski G.V."/>
            <person name="Ussery D."/>
            <person name="Barrell B.G."/>
            <person name="Nurse P."/>
        </authorList>
    </citation>
    <scope>NUCLEOTIDE SEQUENCE [LARGE SCALE GENOMIC DNA]</scope>
    <source>
        <strain>972 / ATCC 24843</strain>
    </source>
</reference>
<reference key="2">
    <citation type="journal article" date="2011" name="Science">
        <title>Comparative functional genomics of the fission yeasts.</title>
        <authorList>
            <person name="Rhind N."/>
            <person name="Chen Z."/>
            <person name="Yassour M."/>
            <person name="Thompson D.A."/>
            <person name="Haas B.J."/>
            <person name="Habib N."/>
            <person name="Wapinski I."/>
            <person name="Roy S."/>
            <person name="Lin M.F."/>
            <person name="Heiman D.I."/>
            <person name="Young S.K."/>
            <person name="Furuya K."/>
            <person name="Guo Y."/>
            <person name="Pidoux A."/>
            <person name="Chen H.M."/>
            <person name="Robbertse B."/>
            <person name="Goldberg J.M."/>
            <person name="Aoki K."/>
            <person name="Bayne E.H."/>
            <person name="Berlin A.M."/>
            <person name="Desjardins C.A."/>
            <person name="Dobbs E."/>
            <person name="Dukaj L."/>
            <person name="Fan L."/>
            <person name="FitzGerald M.G."/>
            <person name="French C."/>
            <person name="Gujja S."/>
            <person name="Hansen K."/>
            <person name="Keifenheim D."/>
            <person name="Levin J.Z."/>
            <person name="Mosher R.A."/>
            <person name="Mueller C.A."/>
            <person name="Pfiffner J."/>
            <person name="Priest M."/>
            <person name="Russ C."/>
            <person name="Smialowska A."/>
            <person name="Swoboda P."/>
            <person name="Sykes S.M."/>
            <person name="Vaughn M."/>
            <person name="Vengrova S."/>
            <person name="Yoder R."/>
            <person name="Zeng Q."/>
            <person name="Allshire R."/>
            <person name="Baulcombe D."/>
            <person name="Birren B.W."/>
            <person name="Brown W."/>
            <person name="Ekwall K."/>
            <person name="Kellis M."/>
            <person name="Leatherwood J."/>
            <person name="Levin H."/>
            <person name="Margalit H."/>
            <person name="Martienssen R."/>
            <person name="Nieduszynski C.A."/>
            <person name="Spatafora J.W."/>
            <person name="Friedman N."/>
            <person name="Dalgaard J.Z."/>
            <person name="Baumann P."/>
            <person name="Niki H."/>
            <person name="Regev A."/>
            <person name="Nusbaum C."/>
        </authorList>
    </citation>
    <scope>REVISION OF GENE MODEL</scope>
</reference>
<reference key="3">
    <citation type="journal article" date="2006" name="Nat. Biotechnol.">
        <title>ORFeome cloning and global analysis of protein localization in the fission yeast Schizosaccharomyces pombe.</title>
        <authorList>
            <person name="Matsuyama A."/>
            <person name="Arai R."/>
            <person name="Yashiroda Y."/>
            <person name="Shirai A."/>
            <person name="Kamata A."/>
            <person name="Sekido S."/>
            <person name="Kobayashi Y."/>
            <person name="Hashimoto A."/>
            <person name="Hamamoto M."/>
            <person name="Hiraoka Y."/>
            <person name="Horinouchi S."/>
            <person name="Yoshida M."/>
        </authorList>
    </citation>
    <scope>SUBCELLULAR LOCATION [LARGE SCALE ANALYSIS]</scope>
</reference>
<feature type="signal peptide" evidence="2">
    <location>
        <begin position="1"/>
        <end position="22"/>
    </location>
</feature>
<feature type="chain" id="PRO_0000303923" description="Thioredoxin domain-containing protein C959.05c">
    <location>
        <begin position="23"/>
        <end position="632"/>
    </location>
</feature>
<feature type="transmembrane region" description="Helical" evidence="2">
    <location>
        <begin position="583"/>
        <end position="603"/>
    </location>
</feature>
<feature type="domain" description="Thioredoxin" evidence="3">
    <location>
        <begin position="153"/>
        <end position="284"/>
    </location>
</feature>
<feature type="glycosylation site" description="N-linked (GlcNAc...) asparagine" evidence="2">
    <location>
        <position position="35"/>
    </location>
</feature>
<feature type="glycosylation site" description="N-linked (GlcNAc...) asparagine" evidence="2">
    <location>
        <position position="41"/>
    </location>
</feature>
<feature type="glycosylation site" description="N-linked (GlcNAc...) asparagine" evidence="2">
    <location>
        <position position="140"/>
    </location>
</feature>
<feature type="glycosylation site" description="N-linked (GlcNAc...) asparagine" evidence="2">
    <location>
        <position position="557"/>
    </location>
</feature>
<feature type="disulfide bond" description="Redox-active" evidence="3">
    <location>
        <begin position="209"/>
        <end position="212"/>
    </location>
</feature>
<evidence type="ECO:0000250" key="1"/>
<evidence type="ECO:0000255" key="2"/>
<evidence type="ECO:0000255" key="3">
    <source>
        <dbReference type="PROSITE-ProRule" id="PRU00691"/>
    </source>
</evidence>
<evidence type="ECO:0000305" key="4"/>
<organism>
    <name type="scientific">Schizosaccharomyces pombe (strain 972 / ATCC 24843)</name>
    <name type="common">Fission yeast</name>
    <dbReference type="NCBI Taxonomy" id="284812"/>
    <lineage>
        <taxon>Eukaryota</taxon>
        <taxon>Fungi</taxon>
        <taxon>Dikarya</taxon>
        <taxon>Ascomycota</taxon>
        <taxon>Taphrinomycotina</taxon>
        <taxon>Schizosaccharomycetes</taxon>
        <taxon>Schizosaccharomycetales</taxon>
        <taxon>Schizosaccharomycetaceae</taxon>
        <taxon>Schizosaccharomyces</taxon>
    </lineage>
</organism>
<comment type="function">
    <text evidence="1">Acts as a membrane-bound chaperone in endoplasmic reticulum quality control. Probably facilitates presentation of substrate to membrane-bound components of the degradation machinery (By similarity).</text>
</comment>
<comment type="catalytic activity">
    <reaction>
        <text>Catalyzes the rearrangement of -S-S- bonds in proteins.</text>
        <dbReference type="EC" id="5.3.4.1"/>
    </reaction>
</comment>
<comment type="subcellular location">
    <subcellularLocation>
        <location evidence="4">Endoplasmic reticulum membrane</location>
        <topology evidence="4">Single-pass membrane protein</topology>
    </subcellularLocation>
</comment>
<comment type="similarity">
    <text evidence="4">Belongs to the protein disulfide isomerase family.</text>
</comment>
<proteinExistence type="inferred from homology"/>